<organism>
    <name type="scientific">Saccharomyces cerevisiae (strain ATCC 204508 / S288c)</name>
    <name type="common">Baker's yeast</name>
    <dbReference type="NCBI Taxonomy" id="559292"/>
    <lineage>
        <taxon>Eukaryota</taxon>
        <taxon>Fungi</taxon>
        <taxon>Dikarya</taxon>
        <taxon>Ascomycota</taxon>
        <taxon>Saccharomycotina</taxon>
        <taxon>Saccharomycetes</taxon>
        <taxon>Saccharomycetales</taxon>
        <taxon>Saccharomycetaceae</taxon>
        <taxon>Saccharomyces</taxon>
    </lineage>
</organism>
<gene>
    <name type="primary">MIX14</name>
    <name type="synonym">MIC14</name>
    <name type="ordered locus">YDR031W</name>
    <name type="ORF">YD9673.01</name>
</gene>
<evidence type="ECO:0000255" key="1">
    <source>
        <dbReference type="PROSITE-ProRule" id="PRU01150"/>
    </source>
</evidence>
<evidence type="ECO:0000269" key="2">
    <source>
    </source>
</evidence>
<evidence type="ECO:0000269" key="3">
    <source>
    </source>
</evidence>
<evidence type="ECO:0000305" key="4"/>
<name>MIX14_YEAST</name>
<feature type="chain" id="PRO_0000242621" description="Mitochondrial intermembrane space cysteine motif-containing protein MIX14">
    <location>
        <begin position="1"/>
        <end position="121"/>
    </location>
</feature>
<feature type="domain" description="CHCH 1" evidence="1">
    <location>
        <begin position="14"/>
        <end position="56"/>
    </location>
</feature>
<feature type="domain" description="CHCH 2" evidence="1">
    <location>
        <begin position="60"/>
        <end position="105"/>
    </location>
</feature>
<feature type="short sequence motif" description="Cx9C motif 1" evidence="1">
    <location>
        <begin position="17"/>
        <end position="27"/>
    </location>
</feature>
<feature type="short sequence motif" description="Cx9C motif 2" evidence="1">
    <location>
        <begin position="38"/>
        <end position="48"/>
    </location>
</feature>
<feature type="short sequence motif" description="Cx9C motif 3" evidence="1">
    <location>
        <begin position="63"/>
        <end position="73"/>
    </location>
</feature>
<feature type="short sequence motif" description="Cx9C motif 4" evidence="1">
    <location>
        <begin position="87"/>
        <end position="97"/>
    </location>
</feature>
<feature type="disulfide bond" evidence="1">
    <location>
        <begin position="17"/>
        <end position="48"/>
    </location>
</feature>
<feature type="disulfide bond" evidence="1">
    <location>
        <begin position="27"/>
        <end position="38"/>
    </location>
</feature>
<feature type="disulfide bond" evidence="1">
    <location>
        <begin position="63"/>
        <end position="97"/>
    </location>
</feature>
<feature type="disulfide bond" evidence="1">
    <location>
        <begin position="73"/>
        <end position="87"/>
    </location>
</feature>
<dbReference type="EMBL" id="Z68196">
    <property type="protein sequence ID" value="CAA92368.1"/>
    <property type="molecule type" value="Genomic_DNA"/>
</dbReference>
<dbReference type="EMBL" id="Z74327">
    <property type="protein sequence ID" value="CAA98853.1"/>
    <property type="status" value="ALT_FRAME"/>
    <property type="molecule type" value="Genomic_DNA"/>
</dbReference>
<dbReference type="EMBL" id="BK006938">
    <property type="protein sequence ID" value="DAA11875.1"/>
    <property type="molecule type" value="Genomic_DNA"/>
</dbReference>
<dbReference type="PIR" id="S67845">
    <property type="entry name" value="S67845"/>
</dbReference>
<dbReference type="RefSeq" id="NP_010314.4">
    <property type="nucleotide sequence ID" value="NM_001180339.3"/>
</dbReference>
<dbReference type="SMR" id="Q04341"/>
<dbReference type="BioGRID" id="32080">
    <property type="interactions" value="29"/>
</dbReference>
<dbReference type="DIP" id="DIP-5131N"/>
<dbReference type="FunCoup" id="Q04341">
    <property type="interactions" value="44"/>
</dbReference>
<dbReference type="IntAct" id="Q04341">
    <property type="interactions" value="1"/>
</dbReference>
<dbReference type="STRING" id="4932.YDR031W"/>
<dbReference type="PaxDb" id="4932-YDR031W"/>
<dbReference type="PeptideAtlas" id="Q04341"/>
<dbReference type="EnsemblFungi" id="YDR031W_mRNA">
    <property type="protein sequence ID" value="YDR031W"/>
    <property type="gene ID" value="YDR031W"/>
</dbReference>
<dbReference type="GeneID" id="851595"/>
<dbReference type="KEGG" id="sce:YDR031W"/>
<dbReference type="AGR" id="SGD:S000002438"/>
<dbReference type="SGD" id="S000002438">
    <property type="gene designation" value="MIX14"/>
</dbReference>
<dbReference type="VEuPathDB" id="FungiDB:YDR031W"/>
<dbReference type="eggNOG" id="ENOG502S4BW">
    <property type="taxonomic scope" value="Eukaryota"/>
</dbReference>
<dbReference type="HOGENOM" id="CLU_160816_0_0_1"/>
<dbReference type="InParanoid" id="Q04341"/>
<dbReference type="OMA" id="LAFHQCM"/>
<dbReference type="OrthoDB" id="276296at2759"/>
<dbReference type="BioCyc" id="YEAST:G3O-29646-MONOMER"/>
<dbReference type="BioGRID-ORCS" id="851595">
    <property type="hits" value="0 hits in 10 CRISPR screens"/>
</dbReference>
<dbReference type="PRO" id="PR:Q04341"/>
<dbReference type="Proteomes" id="UP000002311">
    <property type="component" value="Chromosome IV"/>
</dbReference>
<dbReference type="RNAct" id="Q04341">
    <property type="molecule type" value="protein"/>
</dbReference>
<dbReference type="GO" id="GO:0005737">
    <property type="term" value="C:cytoplasm"/>
    <property type="evidence" value="ECO:0007005"/>
    <property type="project" value="SGD"/>
</dbReference>
<dbReference type="GO" id="GO:0005758">
    <property type="term" value="C:mitochondrial intermembrane space"/>
    <property type="evidence" value="ECO:0000314"/>
    <property type="project" value="SGD"/>
</dbReference>
<dbReference type="GO" id="GO:0005739">
    <property type="term" value="C:mitochondrion"/>
    <property type="evidence" value="ECO:0007005"/>
    <property type="project" value="SGD"/>
</dbReference>
<dbReference type="GO" id="GO:0005634">
    <property type="term" value="C:nucleus"/>
    <property type="evidence" value="ECO:0007005"/>
    <property type="project" value="SGD"/>
</dbReference>
<dbReference type="GO" id="GO:0009060">
    <property type="term" value="P:aerobic respiration"/>
    <property type="evidence" value="ECO:0000315"/>
    <property type="project" value="SGD"/>
</dbReference>
<dbReference type="GO" id="GO:0045333">
    <property type="term" value="P:cellular respiration"/>
    <property type="evidence" value="ECO:0000318"/>
    <property type="project" value="GO_Central"/>
</dbReference>
<dbReference type="FunFam" id="1.10.287.2900:FF:000005">
    <property type="entry name" value="Mic14p"/>
    <property type="match status" value="1"/>
</dbReference>
<dbReference type="Gene3D" id="1.10.287.2900">
    <property type="match status" value="2"/>
</dbReference>
<dbReference type="InterPro" id="IPR052848">
    <property type="entry name" value="CHCH_domain-containing_protein"/>
</dbReference>
<dbReference type="InterPro" id="IPR031731">
    <property type="entry name" value="CX9C"/>
</dbReference>
<dbReference type="InterPro" id="IPR016611">
    <property type="entry name" value="Mix14"/>
</dbReference>
<dbReference type="PANTHER" id="PTHR47106">
    <property type="entry name" value="COILED-COIL-HELIX-COILED-COIL-HELIX DOMAIN-CONTAINING PROTEIN 5"/>
    <property type="match status" value="1"/>
</dbReference>
<dbReference type="PANTHER" id="PTHR47106:SF1">
    <property type="entry name" value="COILED-COIL-HELIX-COILED-COIL-HELIX DOMAIN-CONTAINING PROTEIN 5"/>
    <property type="match status" value="1"/>
</dbReference>
<dbReference type="Pfam" id="PF16860">
    <property type="entry name" value="CX9C"/>
    <property type="match status" value="2"/>
</dbReference>
<dbReference type="PIRSF" id="PIRSF013232">
    <property type="entry name" value="UCP013232"/>
    <property type="match status" value="1"/>
</dbReference>
<dbReference type="PROSITE" id="PS51808">
    <property type="entry name" value="CHCH"/>
    <property type="match status" value="2"/>
</dbReference>
<accession>Q04341</accession>
<accession>D6VS15</accession>
<accession>Q07789</accession>
<comment type="subcellular location">
    <subcellularLocation>
        <location evidence="2 3">Mitochondrion intermembrane space</location>
    </subcellularLocation>
    <text evidence="2">Imported into mitochondrion intermembrane space through the MIA pathway.</text>
</comment>
<comment type="sequence caution" evidence="4">
    <conflict type="frameshift">
        <sequence resource="EMBL-CDS" id="CAA98853"/>
    </conflict>
</comment>
<protein>
    <recommendedName>
        <fullName>Mitochondrial intermembrane space cysteine motif-containing protein MIX14</fullName>
    </recommendedName>
    <alternativeName>
        <fullName>Mitochondrial intermembrane space CX(n)C motif protein of 14 kDa</fullName>
    </alternativeName>
</protein>
<sequence>MSDILDEIVIEDVVANCPQEFLQYHKCIRDNEENPGKCKDGRMILSTCIREKVPSVKSIMSECSEPMKKYDQCIRDNMGTRTINENCLGFLQDLRKCAELQVKNKNIKPSINGVNLELIKD</sequence>
<keyword id="KW-1015">Disulfide bond</keyword>
<keyword id="KW-0496">Mitochondrion</keyword>
<keyword id="KW-1185">Reference proteome</keyword>
<keyword id="KW-0677">Repeat</keyword>
<reference key="1">
    <citation type="journal article" date="1997" name="Nature">
        <title>The nucleotide sequence of Saccharomyces cerevisiae chromosome IV.</title>
        <authorList>
            <person name="Jacq C."/>
            <person name="Alt-Moerbe J."/>
            <person name="Andre B."/>
            <person name="Arnold W."/>
            <person name="Bahr A."/>
            <person name="Ballesta J.P.G."/>
            <person name="Bargues M."/>
            <person name="Baron L."/>
            <person name="Becker A."/>
            <person name="Biteau N."/>
            <person name="Bloecker H."/>
            <person name="Blugeon C."/>
            <person name="Boskovic J."/>
            <person name="Brandt P."/>
            <person name="Brueckner M."/>
            <person name="Buitrago M.J."/>
            <person name="Coster F."/>
            <person name="Delaveau T."/>
            <person name="del Rey F."/>
            <person name="Dujon B."/>
            <person name="Eide L.G."/>
            <person name="Garcia-Cantalejo J.M."/>
            <person name="Goffeau A."/>
            <person name="Gomez-Peris A."/>
            <person name="Granotier C."/>
            <person name="Hanemann V."/>
            <person name="Hankeln T."/>
            <person name="Hoheisel J.D."/>
            <person name="Jaeger W."/>
            <person name="Jimenez A."/>
            <person name="Jonniaux J.-L."/>
            <person name="Kraemer C."/>
            <person name="Kuester H."/>
            <person name="Laamanen P."/>
            <person name="Legros Y."/>
            <person name="Louis E.J."/>
            <person name="Moeller-Rieker S."/>
            <person name="Monnet A."/>
            <person name="Moro M."/>
            <person name="Mueller-Auer S."/>
            <person name="Nussbaumer B."/>
            <person name="Paricio N."/>
            <person name="Paulin L."/>
            <person name="Perea J."/>
            <person name="Perez-Alonso M."/>
            <person name="Perez-Ortin J.E."/>
            <person name="Pohl T.M."/>
            <person name="Prydz H."/>
            <person name="Purnelle B."/>
            <person name="Rasmussen S.W."/>
            <person name="Remacha M.A."/>
            <person name="Revuelta J.L."/>
            <person name="Rieger M."/>
            <person name="Salom D."/>
            <person name="Saluz H.P."/>
            <person name="Saiz J.E."/>
            <person name="Saren A.-M."/>
            <person name="Schaefer M."/>
            <person name="Scharfe M."/>
            <person name="Schmidt E.R."/>
            <person name="Schneider C."/>
            <person name="Scholler P."/>
            <person name="Schwarz S."/>
            <person name="Soler-Mira A."/>
            <person name="Urrestarazu L.A."/>
            <person name="Verhasselt P."/>
            <person name="Vissers S."/>
            <person name="Voet M."/>
            <person name="Volckaert G."/>
            <person name="Wagner G."/>
            <person name="Wambutt R."/>
            <person name="Wedler E."/>
            <person name="Wedler H."/>
            <person name="Woelfl S."/>
            <person name="Harris D.E."/>
            <person name="Bowman S."/>
            <person name="Brown D."/>
            <person name="Churcher C.M."/>
            <person name="Connor R."/>
            <person name="Dedman K."/>
            <person name="Gentles S."/>
            <person name="Hamlin N."/>
            <person name="Hunt S."/>
            <person name="Jones L."/>
            <person name="McDonald S."/>
            <person name="Murphy L.D."/>
            <person name="Niblett D."/>
            <person name="Odell C."/>
            <person name="Oliver K."/>
            <person name="Rajandream M.A."/>
            <person name="Richards C."/>
            <person name="Shore L."/>
            <person name="Walsh S.V."/>
            <person name="Barrell B.G."/>
            <person name="Dietrich F.S."/>
            <person name="Mulligan J.T."/>
            <person name="Allen E."/>
            <person name="Araujo R."/>
            <person name="Aviles E."/>
            <person name="Berno A."/>
            <person name="Carpenter J."/>
            <person name="Chen E."/>
            <person name="Cherry J.M."/>
            <person name="Chung E."/>
            <person name="Duncan M."/>
            <person name="Hunicke-Smith S."/>
            <person name="Hyman R.W."/>
            <person name="Komp C."/>
            <person name="Lashkari D."/>
            <person name="Lew H."/>
            <person name="Lin D."/>
            <person name="Mosedale D."/>
            <person name="Nakahara K."/>
            <person name="Namath A."/>
            <person name="Oefner P."/>
            <person name="Oh C."/>
            <person name="Petel F.X."/>
            <person name="Roberts D."/>
            <person name="Schramm S."/>
            <person name="Schroeder M."/>
            <person name="Shogren T."/>
            <person name="Shroff N."/>
            <person name="Winant A."/>
            <person name="Yelton M.A."/>
            <person name="Botstein D."/>
            <person name="Davis R.W."/>
            <person name="Johnston M."/>
            <person name="Andrews S."/>
            <person name="Brinkman R."/>
            <person name="Cooper J."/>
            <person name="Ding H."/>
            <person name="Du Z."/>
            <person name="Favello A."/>
            <person name="Fulton L."/>
            <person name="Gattung S."/>
            <person name="Greco T."/>
            <person name="Hallsworth K."/>
            <person name="Hawkins J."/>
            <person name="Hillier L.W."/>
            <person name="Jier M."/>
            <person name="Johnson D."/>
            <person name="Johnston L."/>
            <person name="Kirsten J."/>
            <person name="Kucaba T."/>
            <person name="Langston Y."/>
            <person name="Latreille P."/>
            <person name="Le T."/>
            <person name="Mardis E."/>
            <person name="Menezes S."/>
            <person name="Miller N."/>
            <person name="Nhan M."/>
            <person name="Pauley A."/>
            <person name="Peluso D."/>
            <person name="Rifkin L."/>
            <person name="Riles L."/>
            <person name="Taich A."/>
            <person name="Trevaskis E."/>
            <person name="Vignati D."/>
            <person name="Wilcox L."/>
            <person name="Wohldman P."/>
            <person name="Vaudin M."/>
            <person name="Wilson R."/>
            <person name="Waterston R."/>
            <person name="Albermann K."/>
            <person name="Hani J."/>
            <person name="Heumann K."/>
            <person name="Kleine K."/>
            <person name="Mewes H.-W."/>
            <person name="Zollner A."/>
            <person name="Zaccaria P."/>
        </authorList>
    </citation>
    <scope>NUCLEOTIDE SEQUENCE [LARGE SCALE GENOMIC DNA]</scope>
    <source>
        <strain>ATCC 204508 / S288c</strain>
    </source>
</reference>
<reference key="2">
    <citation type="journal article" date="2014" name="G3 (Bethesda)">
        <title>The reference genome sequence of Saccharomyces cerevisiae: Then and now.</title>
        <authorList>
            <person name="Engel S.R."/>
            <person name="Dietrich F.S."/>
            <person name="Fisk D.G."/>
            <person name="Binkley G."/>
            <person name="Balakrishnan R."/>
            <person name="Costanzo M.C."/>
            <person name="Dwight S.S."/>
            <person name="Hitz B.C."/>
            <person name="Karra K."/>
            <person name="Nash R.S."/>
            <person name="Weng S."/>
            <person name="Wong E.D."/>
            <person name="Lloyd P."/>
            <person name="Skrzypek M.S."/>
            <person name="Miyasato S.R."/>
            <person name="Simison M."/>
            <person name="Cherry J.M."/>
        </authorList>
    </citation>
    <scope>GENOME REANNOTATION</scope>
    <source>
        <strain>ATCC 204508 / S288c</strain>
    </source>
</reference>
<reference key="3">
    <citation type="journal article" date="2007" name="J. Mol. Biol.">
        <title>Novel mitochondrial intermembrane space proteins as substrates of the MIA import pathway.</title>
        <authorList>
            <person name="Gabriel K."/>
            <person name="Milenkovic D."/>
            <person name="Chacinska A."/>
            <person name="Mueller J."/>
            <person name="Guiard B."/>
            <person name="Pfanner N."/>
            <person name="Meisinger C."/>
        </authorList>
    </citation>
    <scope>SUBCELLULAR LOCATION</scope>
</reference>
<reference key="4">
    <citation type="journal article" date="2012" name="Mol. Cell. Proteomics">
        <title>Intermembrane space proteome of yeast mitochondria.</title>
        <authorList>
            <person name="Voegtle F.N."/>
            <person name="Burkhart J.M."/>
            <person name="Rao S."/>
            <person name="Gerbeth C."/>
            <person name="Hinrichs J."/>
            <person name="Martinou J.C."/>
            <person name="Chacinska A."/>
            <person name="Sickmann A."/>
            <person name="Zahedi R.P."/>
            <person name="Meisinger C."/>
        </authorList>
    </citation>
    <scope>IDENTIFICATION BY MASS SPECTROMETRY</scope>
    <scope>SUBCELLULAR LOCATION [LARGE SCALE ANALYSIS]</scope>
</reference>
<reference key="5">
    <citation type="journal article" date="2014" name="J. Cell Biol.">
        <title>Uniform nomenclature for the mitochondrial contact site and cristae organizing system.</title>
        <authorList>
            <person name="Pfanner N."/>
            <person name="van der Laan M."/>
            <person name="Amati P."/>
            <person name="Capaldi R.A."/>
            <person name="Caudy A.A."/>
            <person name="Chacinska A."/>
            <person name="Darshi M."/>
            <person name="Deckers M."/>
            <person name="Hoppins S."/>
            <person name="Icho T."/>
            <person name="Jakobs S."/>
            <person name="Ji J."/>
            <person name="Kozjak-Pavlovic V."/>
            <person name="Meisinger C."/>
            <person name="Odgren P.R."/>
            <person name="Park S.K."/>
            <person name="Rehling P."/>
            <person name="Reichert A.S."/>
            <person name="Sheikh M.S."/>
            <person name="Taylor S.S."/>
            <person name="Tsuchida N."/>
            <person name="van der Bliek A.M."/>
            <person name="van der Klei I.J."/>
            <person name="Weissman J.S."/>
            <person name="Westermann B."/>
            <person name="Zha J."/>
            <person name="Neupert W."/>
            <person name="Nunnari J."/>
        </authorList>
    </citation>
    <scope>GENE NAME</scope>
</reference>
<proteinExistence type="evidence at protein level"/>